<comment type="function">
    <text evidence="1">Binds together with bS18 to 16S ribosomal RNA.</text>
</comment>
<comment type="similarity">
    <text evidence="1">Belongs to the bacterial ribosomal protein bS6 family.</text>
</comment>
<protein>
    <recommendedName>
        <fullName evidence="1">Small ribosomal subunit protein bS6</fullName>
    </recommendedName>
    <alternativeName>
        <fullName evidence="2">30S ribosomal protein S6</fullName>
    </alternativeName>
</protein>
<sequence length="93" mass="10964">MRNYELMTVFPVEEDLYKPGIDALHSILADFGVQIKSEEPFGDRDLAYEIKKKTKGRYVLFNIEADPAKMIELDKRFKLITQMLTYLFVRLED</sequence>
<name>RS6_TREDE</name>
<evidence type="ECO:0000255" key="1">
    <source>
        <dbReference type="HAMAP-Rule" id="MF_00360"/>
    </source>
</evidence>
<evidence type="ECO:0000305" key="2"/>
<accession>Q73M32</accession>
<feature type="chain" id="PRO_0000176866" description="Small ribosomal subunit protein bS6">
    <location>
        <begin position="1"/>
        <end position="93"/>
    </location>
</feature>
<dbReference type="EMBL" id="AE017226">
    <property type="protein sequence ID" value="AAS12194.1"/>
    <property type="molecule type" value="Genomic_DNA"/>
</dbReference>
<dbReference type="RefSeq" id="NP_972283.1">
    <property type="nucleotide sequence ID" value="NC_002967.9"/>
</dbReference>
<dbReference type="RefSeq" id="WP_002669351.1">
    <property type="nucleotide sequence ID" value="NC_002967.9"/>
</dbReference>
<dbReference type="SMR" id="Q73M32"/>
<dbReference type="STRING" id="243275.TDE_1678"/>
<dbReference type="PaxDb" id="243275-TDE_1678"/>
<dbReference type="GeneID" id="2740133"/>
<dbReference type="KEGG" id="tde:TDE_1678"/>
<dbReference type="PATRIC" id="fig|243275.7.peg.1604"/>
<dbReference type="eggNOG" id="COG0360">
    <property type="taxonomic scope" value="Bacteria"/>
</dbReference>
<dbReference type="HOGENOM" id="CLU_113441_5_1_12"/>
<dbReference type="OrthoDB" id="9812702at2"/>
<dbReference type="Proteomes" id="UP000008212">
    <property type="component" value="Chromosome"/>
</dbReference>
<dbReference type="GO" id="GO:1990904">
    <property type="term" value="C:ribonucleoprotein complex"/>
    <property type="evidence" value="ECO:0007669"/>
    <property type="project" value="UniProtKB-KW"/>
</dbReference>
<dbReference type="GO" id="GO:0005840">
    <property type="term" value="C:ribosome"/>
    <property type="evidence" value="ECO:0007669"/>
    <property type="project" value="UniProtKB-KW"/>
</dbReference>
<dbReference type="GO" id="GO:0019843">
    <property type="term" value="F:rRNA binding"/>
    <property type="evidence" value="ECO:0007669"/>
    <property type="project" value="UniProtKB-UniRule"/>
</dbReference>
<dbReference type="GO" id="GO:0003735">
    <property type="term" value="F:structural constituent of ribosome"/>
    <property type="evidence" value="ECO:0007669"/>
    <property type="project" value="InterPro"/>
</dbReference>
<dbReference type="GO" id="GO:0006412">
    <property type="term" value="P:translation"/>
    <property type="evidence" value="ECO:0007669"/>
    <property type="project" value="UniProtKB-UniRule"/>
</dbReference>
<dbReference type="CDD" id="cd00473">
    <property type="entry name" value="bS6"/>
    <property type="match status" value="1"/>
</dbReference>
<dbReference type="Gene3D" id="3.30.70.60">
    <property type="match status" value="1"/>
</dbReference>
<dbReference type="HAMAP" id="MF_00360">
    <property type="entry name" value="Ribosomal_bS6"/>
    <property type="match status" value="1"/>
</dbReference>
<dbReference type="InterPro" id="IPR000529">
    <property type="entry name" value="Ribosomal_bS6"/>
</dbReference>
<dbReference type="InterPro" id="IPR020815">
    <property type="entry name" value="Ribosomal_bS6_CS"/>
</dbReference>
<dbReference type="InterPro" id="IPR035980">
    <property type="entry name" value="Ribosomal_bS6_sf"/>
</dbReference>
<dbReference type="InterPro" id="IPR020814">
    <property type="entry name" value="Ribosomal_S6_plastid/chlpt"/>
</dbReference>
<dbReference type="InterPro" id="IPR014717">
    <property type="entry name" value="Transl_elong_EF1B/ribsomal_bS6"/>
</dbReference>
<dbReference type="NCBIfam" id="TIGR00166">
    <property type="entry name" value="S6"/>
    <property type="match status" value="1"/>
</dbReference>
<dbReference type="Pfam" id="PF01250">
    <property type="entry name" value="Ribosomal_S6"/>
    <property type="match status" value="1"/>
</dbReference>
<dbReference type="SUPFAM" id="SSF54995">
    <property type="entry name" value="Ribosomal protein S6"/>
    <property type="match status" value="1"/>
</dbReference>
<dbReference type="PROSITE" id="PS01048">
    <property type="entry name" value="RIBOSOMAL_S6"/>
    <property type="match status" value="1"/>
</dbReference>
<reference key="1">
    <citation type="journal article" date="2004" name="Proc. Natl. Acad. Sci. U.S.A.">
        <title>Comparison of the genome of the oral pathogen Treponema denticola with other spirochete genomes.</title>
        <authorList>
            <person name="Seshadri R."/>
            <person name="Myers G.S.A."/>
            <person name="Tettelin H."/>
            <person name="Eisen J.A."/>
            <person name="Heidelberg J.F."/>
            <person name="Dodson R.J."/>
            <person name="Davidsen T.M."/>
            <person name="DeBoy R.T."/>
            <person name="Fouts D.E."/>
            <person name="Haft D.H."/>
            <person name="Selengut J."/>
            <person name="Ren Q."/>
            <person name="Brinkac L.M."/>
            <person name="Madupu R."/>
            <person name="Kolonay J.F."/>
            <person name="Durkin S.A."/>
            <person name="Daugherty S.C."/>
            <person name="Shetty J."/>
            <person name="Shvartsbeyn A."/>
            <person name="Gebregeorgis E."/>
            <person name="Geer K."/>
            <person name="Tsegaye G."/>
            <person name="Malek J.A."/>
            <person name="Ayodeji B."/>
            <person name="Shatsman S."/>
            <person name="McLeod M.P."/>
            <person name="Smajs D."/>
            <person name="Howell J.K."/>
            <person name="Pal S."/>
            <person name="Amin A."/>
            <person name="Vashisth P."/>
            <person name="McNeill T.Z."/>
            <person name="Xiang Q."/>
            <person name="Sodergren E."/>
            <person name="Baca E."/>
            <person name="Weinstock G.M."/>
            <person name="Norris S.J."/>
            <person name="Fraser C.M."/>
            <person name="Paulsen I.T."/>
        </authorList>
    </citation>
    <scope>NUCLEOTIDE SEQUENCE [LARGE SCALE GENOMIC DNA]</scope>
    <source>
        <strain>ATCC 35405 / DSM 14222 / CIP 103919 / JCM 8153 / KCTC 15104</strain>
    </source>
</reference>
<gene>
    <name evidence="1" type="primary">rpsF</name>
    <name type="ordered locus">TDE_1678</name>
</gene>
<organism>
    <name type="scientific">Treponema denticola (strain ATCC 35405 / DSM 14222 / CIP 103919 / JCM 8153 / KCTC 15104)</name>
    <dbReference type="NCBI Taxonomy" id="243275"/>
    <lineage>
        <taxon>Bacteria</taxon>
        <taxon>Pseudomonadati</taxon>
        <taxon>Spirochaetota</taxon>
        <taxon>Spirochaetia</taxon>
        <taxon>Spirochaetales</taxon>
        <taxon>Treponemataceae</taxon>
        <taxon>Treponema</taxon>
    </lineage>
</organism>
<keyword id="KW-1185">Reference proteome</keyword>
<keyword id="KW-0687">Ribonucleoprotein</keyword>
<keyword id="KW-0689">Ribosomal protein</keyword>
<keyword id="KW-0694">RNA-binding</keyword>
<keyword id="KW-0699">rRNA-binding</keyword>
<proteinExistence type="inferred from homology"/>